<reference key="1">
    <citation type="journal article" date="1995" name="Science">
        <title>Whole-genome random sequencing and assembly of Haemophilus influenzae Rd.</title>
        <authorList>
            <person name="Fleischmann R.D."/>
            <person name="Adams M.D."/>
            <person name="White O."/>
            <person name="Clayton R.A."/>
            <person name="Kirkness E.F."/>
            <person name="Kerlavage A.R."/>
            <person name="Bult C.J."/>
            <person name="Tomb J.-F."/>
            <person name="Dougherty B.A."/>
            <person name="Merrick J.M."/>
            <person name="McKenney K."/>
            <person name="Sutton G.G."/>
            <person name="FitzHugh W."/>
            <person name="Fields C.A."/>
            <person name="Gocayne J.D."/>
            <person name="Scott J.D."/>
            <person name="Shirley R."/>
            <person name="Liu L.-I."/>
            <person name="Glodek A."/>
            <person name="Kelley J.M."/>
            <person name="Weidman J.F."/>
            <person name="Phillips C.A."/>
            <person name="Spriggs T."/>
            <person name="Hedblom E."/>
            <person name="Cotton M.D."/>
            <person name="Utterback T.R."/>
            <person name="Hanna M.C."/>
            <person name="Nguyen D.T."/>
            <person name="Saudek D.M."/>
            <person name="Brandon R.C."/>
            <person name="Fine L.D."/>
            <person name="Fritchman J.L."/>
            <person name="Fuhrmann J.L."/>
            <person name="Geoghagen N.S.M."/>
            <person name="Gnehm C.L."/>
            <person name="McDonald L.A."/>
            <person name="Small K.V."/>
            <person name="Fraser C.M."/>
            <person name="Smith H.O."/>
            <person name="Venter J.C."/>
        </authorList>
    </citation>
    <scope>NUCLEOTIDE SEQUENCE [LARGE SCALE GENOMIC DNA]</scope>
    <source>
        <strain>ATCC 51907 / DSM 11121 / KW20 / Rd</strain>
    </source>
</reference>
<accession>P43941</accession>
<name>Y100_HAEIN</name>
<proteinExistence type="predicted"/>
<keyword id="KW-1185">Reference proteome</keyword>
<organism>
    <name type="scientific">Haemophilus influenzae (strain ATCC 51907 / DSM 11121 / KW20 / Rd)</name>
    <dbReference type="NCBI Taxonomy" id="71421"/>
    <lineage>
        <taxon>Bacteria</taxon>
        <taxon>Pseudomonadati</taxon>
        <taxon>Pseudomonadota</taxon>
        <taxon>Gammaproteobacteria</taxon>
        <taxon>Pasteurellales</taxon>
        <taxon>Pasteurellaceae</taxon>
        <taxon>Haemophilus</taxon>
    </lineage>
</organism>
<sequence length="131" mass="15062">MSGDFTLVCITAASRHHWGTEVDIFDPDLLPRGQSLQLEPWEYEKGGYFFELSEFLAENLPHFDFALPFMNMQSNKKVGREPWHISYLPLAELASQQFSPEILPQAWKGENILGADCLISHLEQIFSEYIV</sequence>
<gene>
    <name type="ordered locus">HI_0100</name>
</gene>
<protein>
    <recommendedName>
        <fullName>Uncharacterized protein HI_0100</fullName>
    </recommendedName>
</protein>
<feature type="chain" id="PRO_0000077888" description="Uncharacterized protein HI_0100">
    <location>
        <begin position="1"/>
        <end position="131"/>
    </location>
</feature>
<dbReference type="EMBL" id="L42023">
    <property type="protein sequence ID" value="AAC21781.1"/>
    <property type="molecule type" value="Genomic_DNA"/>
</dbReference>
<dbReference type="PIR" id="D64001">
    <property type="entry name" value="D64001"/>
</dbReference>
<dbReference type="STRING" id="71421.HI_0100"/>
<dbReference type="EnsemblBacteria" id="AAC21781">
    <property type="protein sequence ID" value="AAC21781"/>
    <property type="gene ID" value="HI_0100"/>
</dbReference>
<dbReference type="KEGG" id="hin:HI_0100"/>
<dbReference type="eggNOG" id="COG1876">
    <property type="taxonomic scope" value="Bacteria"/>
</dbReference>
<dbReference type="HOGENOM" id="CLU_1924620_0_0_6"/>
<dbReference type="Proteomes" id="UP000000579">
    <property type="component" value="Chromosome"/>
</dbReference>
<dbReference type="GO" id="GO:0008233">
    <property type="term" value="F:peptidase activity"/>
    <property type="evidence" value="ECO:0007669"/>
    <property type="project" value="InterPro"/>
</dbReference>
<dbReference type="GO" id="GO:0006508">
    <property type="term" value="P:proteolysis"/>
    <property type="evidence" value="ECO:0007669"/>
    <property type="project" value="InterPro"/>
</dbReference>
<dbReference type="Gene3D" id="3.30.1380.10">
    <property type="match status" value="1"/>
</dbReference>
<dbReference type="InterPro" id="IPR052179">
    <property type="entry name" value="Bact_PeptidoProc_Enz"/>
</dbReference>
<dbReference type="InterPro" id="IPR009045">
    <property type="entry name" value="Hedgehog_sig/DD-Pept_Zn-bd_sf"/>
</dbReference>
<dbReference type="InterPro" id="IPR003709">
    <property type="entry name" value="Pept_M15B"/>
</dbReference>
<dbReference type="PANTHER" id="PTHR34385">
    <property type="entry name" value="D-ALANYL-D-ALANINE CARBOXYPEPTIDASE"/>
    <property type="match status" value="1"/>
</dbReference>
<dbReference type="PANTHER" id="PTHR34385:SF1">
    <property type="entry name" value="PEPTIDOGLYCAN L-ALANYL-D-GLUTAMATE ENDOPEPTIDASE CWLK"/>
    <property type="match status" value="1"/>
</dbReference>
<dbReference type="Pfam" id="PF02557">
    <property type="entry name" value="VanY"/>
    <property type="match status" value="1"/>
</dbReference>